<gene>
    <name evidence="1" type="primary">pdxT</name>
    <name type="ordered locus">Dtur_1483</name>
</gene>
<dbReference type="EC" id="4.3.3.6" evidence="1"/>
<dbReference type="EC" id="3.5.1.2" evidence="1"/>
<dbReference type="EMBL" id="CP001251">
    <property type="protein sequence ID" value="ACK42757.1"/>
    <property type="molecule type" value="Genomic_DNA"/>
</dbReference>
<dbReference type="RefSeq" id="WP_012583835.1">
    <property type="nucleotide sequence ID" value="NC_011661.1"/>
</dbReference>
<dbReference type="RefSeq" id="YP_002353371.1">
    <property type="nucleotide sequence ID" value="NC_011661.1"/>
</dbReference>
<dbReference type="SMR" id="B8E120"/>
<dbReference type="FunCoup" id="B8E120">
    <property type="interactions" value="151"/>
</dbReference>
<dbReference type="STRING" id="515635.Dtur_1483"/>
<dbReference type="MEROPS" id="C26.A32"/>
<dbReference type="EnsemblBacteria" id="ACK42757">
    <property type="protein sequence ID" value="ACK42757"/>
    <property type="gene ID" value="Dtur_1483"/>
</dbReference>
<dbReference type="KEGG" id="dtu:Dtur_1483"/>
<dbReference type="PATRIC" id="fig|515635.4.peg.1532"/>
<dbReference type="eggNOG" id="COG0311">
    <property type="taxonomic scope" value="Bacteria"/>
</dbReference>
<dbReference type="HOGENOM" id="CLU_069674_2_0_0"/>
<dbReference type="InParanoid" id="B8E120"/>
<dbReference type="OrthoDB" id="9810320at2"/>
<dbReference type="UniPathway" id="UPA00245"/>
<dbReference type="Proteomes" id="UP000007719">
    <property type="component" value="Chromosome"/>
</dbReference>
<dbReference type="GO" id="GO:0005829">
    <property type="term" value="C:cytosol"/>
    <property type="evidence" value="ECO:0000318"/>
    <property type="project" value="GO_Central"/>
</dbReference>
<dbReference type="GO" id="GO:1903600">
    <property type="term" value="C:glutaminase complex"/>
    <property type="evidence" value="ECO:0000318"/>
    <property type="project" value="GO_Central"/>
</dbReference>
<dbReference type="GO" id="GO:0004359">
    <property type="term" value="F:glutaminase activity"/>
    <property type="evidence" value="ECO:0007669"/>
    <property type="project" value="UniProtKB-UniRule"/>
</dbReference>
<dbReference type="GO" id="GO:0036381">
    <property type="term" value="F:pyridoxal 5'-phosphate synthase (glutamine hydrolysing) activity"/>
    <property type="evidence" value="ECO:0007669"/>
    <property type="project" value="UniProtKB-UniRule"/>
</dbReference>
<dbReference type="GO" id="GO:0006543">
    <property type="term" value="P:glutamine catabolic process"/>
    <property type="evidence" value="ECO:0007669"/>
    <property type="project" value="UniProtKB-UniRule"/>
</dbReference>
<dbReference type="GO" id="GO:0042823">
    <property type="term" value="P:pyridoxal phosphate biosynthetic process"/>
    <property type="evidence" value="ECO:0000318"/>
    <property type="project" value="GO_Central"/>
</dbReference>
<dbReference type="GO" id="GO:0008614">
    <property type="term" value="P:pyridoxine metabolic process"/>
    <property type="evidence" value="ECO:0000318"/>
    <property type="project" value="GO_Central"/>
</dbReference>
<dbReference type="CDD" id="cd01749">
    <property type="entry name" value="GATase1_PB"/>
    <property type="match status" value="1"/>
</dbReference>
<dbReference type="FunFam" id="3.40.50.880:FF:000041">
    <property type="entry name" value="Glutamine amidotransferase subunit pdxT, putative"/>
    <property type="match status" value="1"/>
</dbReference>
<dbReference type="Gene3D" id="3.40.50.880">
    <property type="match status" value="1"/>
</dbReference>
<dbReference type="HAMAP" id="MF_01615">
    <property type="entry name" value="PdxT"/>
    <property type="match status" value="1"/>
</dbReference>
<dbReference type="InterPro" id="IPR029062">
    <property type="entry name" value="Class_I_gatase-like"/>
</dbReference>
<dbReference type="InterPro" id="IPR002161">
    <property type="entry name" value="PdxT/SNO"/>
</dbReference>
<dbReference type="InterPro" id="IPR021196">
    <property type="entry name" value="PdxT/SNO_CS"/>
</dbReference>
<dbReference type="NCBIfam" id="TIGR03800">
    <property type="entry name" value="PLP_synth_Pdx2"/>
    <property type="match status" value="1"/>
</dbReference>
<dbReference type="PANTHER" id="PTHR31559">
    <property type="entry name" value="PYRIDOXAL 5'-PHOSPHATE SYNTHASE SUBUNIT SNO"/>
    <property type="match status" value="1"/>
</dbReference>
<dbReference type="PANTHER" id="PTHR31559:SF0">
    <property type="entry name" value="PYRIDOXAL 5'-PHOSPHATE SYNTHASE SUBUNIT SNO1-RELATED"/>
    <property type="match status" value="1"/>
</dbReference>
<dbReference type="Pfam" id="PF01174">
    <property type="entry name" value="SNO"/>
    <property type="match status" value="1"/>
</dbReference>
<dbReference type="PIRSF" id="PIRSF005639">
    <property type="entry name" value="Glut_amidoT_SNO"/>
    <property type="match status" value="1"/>
</dbReference>
<dbReference type="SUPFAM" id="SSF52317">
    <property type="entry name" value="Class I glutamine amidotransferase-like"/>
    <property type="match status" value="1"/>
</dbReference>
<dbReference type="PROSITE" id="PS01236">
    <property type="entry name" value="PDXT_SNO_1"/>
    <property type="match status" value="1"/>
</dbReference>
<dbReference type="PROSITE" id="PS51130">
    <property type="entry name" value="PDXT_SNO_2"/>
    <property type="match status" value="1"/>
</dbReference>
<keyword id="KW-0315">Glutamine amidotransferase</keyword>
<keyword id="KW-0378">Hydrolase</keyword>
<keyword id="KW-0456">Lyase</keyword>
<keyword id="KW-0663">Pyridoxal phosphate</keyword>
<keyword id="KW-1185">Reference proteome</keyword>
<organism>
    <name type="scientific">Dictyoglomus turgidum (strain DSM 6724 / Z-1310)</name>
    <dbReference type="NCBI Taxonomy" id="515635"/>
    <lineage>
        <taxon>Bacteria</taxon>
        <taxon>Pseudomonadati</taxon>
        <taxon>Dictyoglomota</taxon>
        <taxon>Dictyoglomia</taxon>
        <taxon>Dictyoglomales</taxon>
        <taxon>Dictyoglomaceae</taxon>
        <taxon>Dictyoglomus</taxon>
    </lineage>
</organism>
<feature type="chain" id="PRO_1000185887" description="Pyridoxal 5'-phosphate synthase subunit PdxT">
    <location>
        <begin position="1"/>
        <end position="190"/>
    </location>
</feature>
<feature type="active site" description="Nucleophile" evidence="1">
    <location>
        <position position="78"/>
    </location>
</feature>
<feature type="active site" description="Charge relay system" evidence="1">
    <location>
        <position position="171"/>
    </location>
</feature>
<feature type="active site" description="Charge relay system" evidence="1">
    <location>
        <position position="173"/>
    </location>
</feature>
<feature type="binding site" evidence="1">
    <location>
        <begin position="46"/>
        <end position="48"/>
    </location>
    <ligand>
        <name>L-glutamine</name>
        <dbReference type="ChEBI" id="CHEBI:58359"/>
    </ligand>
</feature>
<feature type="binding site" evidence="1">
    <location>
        <position position="106"/>
    </location>
    <ligand>
        <name>L-glutamine</name>
        <dbReference type="ChEBI" id="CHEBI:58359"/>
    </ligand>
</feature>
<feature type="binding site" evidence="1">
    <location>
        <begin position="135"/>
        <end position="136"/>
    </location>
    <ligand>
        <name>L-glutamine</name>
        <dbReference type="ChEBI" id="CHEBI:58359"/>
    </ligand>
</feature>
<protein>
    <recommendedName>
        <fullName evidence="1">Pyridoxal 5'-phosphate synthase subunit PdxT</fullName>
        <ecNumber evidence="1">4.3.3.6</ecNumber>
    </recommendedName>
    <alternativeName>
        <fullName evidence="1">Pdx2</fullName>
    </alternativeName>
    <alternativeName>
        <fullName evidence="1">Pyridoxal 5'-phosphate synthase glutaminase subunit</fullName>
        <ecNumber evidence="1">3.5.1.2</ecNumber>
    </alternativeName>
</protein>
<sequence length="190" mass="21578">MRIGILAIQGSVVEHEKMLKRLEVETVLVKKPEHLDIINGIILPGGESTTFFTLLENRLLFDVLREKLANGLPAMGTCAGLILLANRIENHPDQKTLKVLDITVSRNAYGRQRESFSTYIKIPILGEKEFECVFIRAPQIVEIGKNVKVHATFENKPIFVEEGNILGLTFHPELTDDLRIHEYFLKRCSE</sequence>
<evidence type="ECO:0000255" key="1">
    <source>
        <dbReference type="HAMAP-Rule" id="MF_01615"/>
    </source>
</evidence>
<reference key="1">
    <citation type="journal article" date="2016" name="Front. Microbiol.">
        <title>The complete genome sequence of hyperthermophile Dictyoglomus turgidum DSM 6724 reveals a specialized carbohydrate fermentor.</title>
        <authorList>
            <person name="Brumm P.J."/>
            <person name="Gowda K."/>
            <person name="Robb F.T."/>
            <person name="Mead D.A."/>
        </authorList>
    </citation>
    <scope>NUCLEOTIDE SEQUENCE [LARGE SCALE GENOMIC DNA]</scope>
    <source>
        <strain>DSM 6724 / Z-1310</strain>
    </source>
</reference>
<comment type="function">
    <text evidence="1">Catalyzes the hydrolysis of glutamine to glutamate and ammonia as part of the biosynthesis of pyridoxal 5'-phosphate. The resulting ammonia molecule is channeled to the active site of PdxS.</text>
</comment>
<comment type="catalytic activity">
    <reaction evidence="1">
        <text>aldehydo-D-ribose 5-phosphate + D-glyceraldehyde 3-phosphate + L-glutamine = pyridoxal 5'-phosphate + L-glutamate + phosphate + 3 H2O + H(+)</text>
        <dbReference type="Rhea" id="RHEA:31507"/>
        <dbReference type="ChEBI" id="CHEBI:15377"/>
        <dbReference type="ChEBI" id="CHEBI:15378"/>
        <dbReference type="ChEBI" id="CHEBI:29985"/>
        <dbReference type="ChEBI" id="CHEBI:43474"/>
        <dbReference type="ChEBI" id="CHEBI:58273"/>
        <dbReference type="ChEBI" id="CHEBI:58359"/>
        <dbReference type="ChEBI" id="CHEBI:59776"/>
        <dbReference type="ChEBI" id="CHEBI:597326"/>
        <dbReference type="EC" id="4.3.3.6"/>
    </reaction>
</comment>
<comment type="catalytic activity">
    <reaction evidence="1">
        <text>L-glutamine + H2O = L-glutamate + NH4(+)</text>
        <dbReference type="Rhea" id="RHEA:15889"/>
        <dbReference type="ChEBI" id="CHEBI:15377"/>
        <dbReference type="ChEBI" id="CHEBI:28938"/>
        <dbReference type="ChEBI" id="CHEBI:29985"/>
        <dbReference type="ChEBI" id="CHEBI:58359"/>
        <dbReference type="EC" id="3.5.1.2"/>
    </reaction>
</comment>
<comment type="pathway">
    <text evidence="1">Cofactor biosynthesis; pyridoxal 5'-phosphate biosynthesis.</text>
</comment>
<comment type="subunit">
    <text evidence="1">In the presence of PdxS, forms a dodecamer of heterodimers. Only shows activity in the heterodimer.</text>
</comment>
<comment type="similarity">
    <text evidence="1">Belongs to the glutaminase PdxT/SNO family.</text>
</comment>
<name>PDXT_DICTD</name>
<proteinExistence type="inferred from homology"/>
<accession>B8E120</accession>